<evidence type="ECO:0000250" key="1"/>
<evidence type="ECO:0000255" key="2">
    <source>
        <dbReference type="PROSITE-ProRule" id="PRU00058"/>
    </source>
</evidence>
<evidence type="ECO:0000255" key="3">
    <source>
        <dbReference type="PROSITE-ProRule" id="PRU00126"/>
    </source>
</evidence>
<evidence type="ECO:0000256" key="4">
    <source>
        <dbReference type="SAM" id="MobiDB-lite"/>
    </source>
</evidence>
<evidence type="ECO:0000269" key="5">
    <source>
    </source>
</evidence>
<evidence type="ECO:0000269" key="6">
    <source>
    </source>
</evidence>
<evidence type="ECO:0000269" key="7">
    <source>
    </source>
</evidence>
<evidence type="ECO:0000269" key="8">
    <source>
    </source>
</evidence>
<evidence type="ECO:0000269" key="9">
    <source>
    </source>
</evidence>
<evidence type="ECO:0000269" key="10">
    <source>
    </source>
</evidence>
<evidence type="ECO:0000305" key="11"/>
<evidence type="ECO:0007744" key="12">
    <source>
    </source>
</evidence>
<comment type="function">
    <text evidence="1">Transcriptional corepressor. Negative regulator of jasmonate responses (By similarity).</text>
</comment>
<comment type="subunit">
    <text evidence="5 6 7 8 9 10">Tetramer (PubMed:26601214). Interacts with NINJA/AFPH2 (PubMed:20360743). Interacts with SMXL6, SMXL7 and SMXL8 (PubMed:26546446). Interacts with SPL (via EAR motif) (PubMed:25378179, PubMed:25527103). Interacts with SPEAR3/TIE1 (PubMed:23444332).</text>
</comment>
<comment type="subcellular location">
    <subcellularLocation>
        <location evidence="1">Nucleus</location>
    </subcellularLocation>
</comment>
<comment type="domain">
    <text evidence="10">The N-terminal TOPLESS domain (TPD) (1-209) binds directly to a 12-amino acid LxLxL EAR motif peptide.</text>
</comment>
<comment type="sequence caution" evidence="11">
    <conflict type="frameshift">
        <sequence resource="EMBL" id="AY074277"/>
    </conflict>
</comment>
<reference key="1">
    <citation type="journal article" date="2000" name="DNA Res.">
        <title>Structural analysis of Arabidopsis thaliana chromosome 3. I. Sequence features of the regions of 4,504,864 bp covered by sixty P1 and TAC clones.</title>
        <authorList>
            <person name="Sato S."/>
            <person name="Nakamura Y."/>
            <person name="Kaneko T."/>
            <person name="Katoh T."/>
            <person name="Asamizu E."/>
            <person name="Tabata S."/>
        </authorList>
    </citation>
    <scope>NUCLEOTIDE SEQUENCE [LARGE SCALE GENOMIC DNA]</scope>
    <source>
        <strain>cv. Columbia</strain>
    </source>
</reference>
<reference key="2">
    <citation type="journal article" date="2017" name="Plant J.">
        <title>Araport11: a complete reannotation of the Arabidopsis thaliana reference genome.</title>
        <authorList>
            <person name="Cheng C.Y."/>
            <person name="Krishnakumar V."/>
            <person name="Chan A.P."/>
            <person name="Thibaud-Nissen F."/>
            <person name="Schobel S."/>
            <person name="Town C.D."/>
        </authorList>
    </citation>
    <scope>GENOME REANNOTATION</scope>
    <source>
        <strain>cv. Columbia</strain>
    </source>
</reference>
<reference key="3">
    <citation type="journal article" date="2003" name="Science">
        <title>Empirical analysis of transcriptional activity in the Arabidopsis genome.</title>
        <authorList>
            <person name="Yamada K."/>
            <person name="Lim J."/>
            <person name="Dale J.M."/>
            <person name="Chen H."/>
            <person name="Shinn P."/>
            <person name="Palm C.J."/>
            <person name="Southwick A.M."/>
            <person name="Wu H.C."/>
            <person name="Kim C.J."/>
            <person name="Nguyen M."/>
            <person name="Pham P.K."/>
            <person name="Cheuk R.F."/>
            <person name="Karlin-Newmann G."/>
            <person name="Liu S.X."/>
            <person name="Lam B."/>
            <person name="Sakano H."/>
            <person name="Wu T."/>
            <person name="Yu G."/>
            <person name="Miranda M."/>
            <person name="Quach H.L."/>
            <person name="Tripp M."/>
            <person name="Chang C.H."/>
            <person name="Lee J.M."/>
            <person name="Toriumi M.J."/>
            <person name="Chan M.M."/>
            <person name="Tang C.C."/>
            <person name="Onodera C.S."/>
            <person name="Deng J.M."/>
            <person name="Akiyama K."/>
            <person name="Ansari Y."/>
            <person name="Arakawa T."/>
            <person name="Banh J."/>
            <person name="Banno F."/>
            <person name="Bowser L."/>
            <person name="Brooks S.Y."/>
            <person name="Carninci P."/>
            <person name="Chao Q."/>
            <person name="Choy N."/>
            <person name="Enju A."/>
            <person name="Goldsmith A.D."/>
            <person name="Gurjal M."/>
            <person name="Hansen N.F."/>
            <person name="Hayashizaki Y."/>
            <person name="Johnson-Hopson C."/>
            <person name="Hsuan V.W."/>
            <person name="Iida K."/>
            <person name="Karnes M."/>
            <person name="Khan S."/>
            <person name="Koesema E."/>
            <person name="Ishida J."/>
            <person name="Jiang P.X."/>
            <person name="Jones T."/>
            <person name="Kawai J."/>
            <person name="Kamiya A."/>
            <person name="Meyers C."/>
            <person name="Nakajima M."/>
            <person name="Narusaka M."/>
            <person name="Seki M."/>
            <person name="Sakurai T."/>
            <person name="Satou M."/>
            <person name="Tamse R."/>
            <person name="Vaysberg M."/>
            <person name="Wallender E.K."/>
            <person name="Wong C."/>
            <person name="Yamamura Y."/>
            <person name="Yuan S."/>
            <person name="Shinozaki K."/>
            <person name="Davis R.W."/>
            <person name="Theologis A."/>
            <person name="Ecker J.R."/>
        </authorList>
    </citation>
    <scope>NUCLEOTIDE SEQUENCE [LARGE SCALE MRNA]</scope>
    <source>
        <strain>cv. Columbia</strain>
    </source>
</reference>
<reference key="4">
    <citation type="journal article" date="2006" name="Science">
        <title>TOPLESS regulates apical embryonic fate in Arabidopsis.</title>
        <authorList>
            <person name="Long J.A."/>
            <person name="Ohno C."/>
            <person name="Smith Z.R."/>
            <person name="Meyerowitz E.M."/>
        </authorList>
    </citation>
    <scope>GENE FAMILY</scope>
    <scope>NOMENCLATURE</scope>
</reference>
<reference key="5">
    <citation type="journal article" date="2009" name="Plant Physiol.">
        <title>Large-scale Arabidopsis phosphoproteome profiling reveals novel chloroplast kinase substrates and phosphorylation networks.</title>
        <authorList>
            <person name="Reiland S."/>
            <person name="Messerli G."/>
            <person name="Baerenfaller K."/>
            <person name="Gerrits B."/>
            <person name="Endler A."/>
            <person name="Grossmann J."/>
            <person name="Gruissem W."/>
            <person name="Baginsky S."/>
        </authorList>
    </citation>
    <scope>PHOSPHORYLATION [LARGE SCALE ANALYSIS] AT THR-214</scope>
    <scope>IDENTIFICATION BY MASS SPECTROMETRY [LARGE SCALE ANALYSIS]</scope>
</reference>
<reference key="6">
    <citation type="journal article" date="2010" name="Nature">
        <title>NINJA connects the co-repressor TOPLESS to jasmonate signalling.</title>
        <authorList>
            <person name="Pauwels L."/>
            <person name="Barbero G.F."/>
            <person name="Geerinck J."/>
            <person name="Tilleman S."/>
            <person name="Grunewald W."/>
            <person name="Perez A.C."/>
            <person name="Chico J.M."/>
            <person name="Bossche R.V."/>
            <person name="Sewell J."/>
            <person name="Gil E."/>
            <person name="Garcia-Casado G."/>
            <person name="Witters E."/>
            <person name="Inze D."/>
            <person name="Long J.A."/>
            <person name="De Jaeger G."/>
            <person name="Solano R."/>
            <person name="Goossens A."/>
        </authorList>
    </citation>
    <scope>INTERACTION WITH AFPH2</scope>
</reference>
<reference key="7">
    <citation type="journal article" date="2013" name="Plant Cell">
        <title>The TIE1 transcriptional repressor links TCP transcription factors with TOPLESS/TOPLESS-RELATED corepressors and modulates leaf development in Arabidopsis.</title>
        <authorList>
            <person name="Tao Q."/>
            <person name="Guo D."/>
            <person name="Wei B."/>
            <person name="Zhang F."/>
            <person name="Pang C."/>
            <person name="Jiang H."/>
            <person name="Zhang J."/>
            <person name="Wei T."/>
            <person name="Gu H."/>
            <person name="Qu L.J."/>
            <person name="Qin G."/>
        </authorList>
    </citation>
    <scope>INTERACTION WITH SPEAR3/TIE1</scope>
</reference>
<reference key="8">
    <citation type="journal article" date="2014" name="J. Genet. Genomics">
        <title>SPOROCYTELESS is a novel embryophyte-specific transcription repressor that interacts with TPL and TCP proteins in Arabidopsis.</title>
        <authorList>
            <person name="Chen G.H."/>
            <person name="Sun J.Y."/>
            <person name="Liu M."/>
            <person name="Liu J."/>
            <person name="Yang W.C."/>
        </authorList>
    </citation>
    <scope>INTERACTION WITH SPL</scope>
</reference>
<reference key="9">
    <citation type="journal article" date="2015" name="Cell Res.">
        <title>The molecular mechanism of sporocyteless/nozzle in controlling Arabidopsis ovule development.</title>
        <authorList>
            <person name="Wei B."/>
            <person name="Zhang J."/>
            <person name="Pang C."/>
            <person name="Yu H."/>
            <person name="Guo D."/>
            <person name="Jiang H."/>
            <person name="Ding M."/>
            <person name="Chen Z."/>
            <person name="Tao Q."/>
            <person name="Gu H."/>
            <person name="Qu L.J."/>
            <person name="Qin G."/>
        </authorList>
    </citation>
    <scope>INTERACTION WITH SPL</scope>
</reference>
<reference key="10">
    <citation type="journal article" date="2015" name="Plant Cell">
        <title>Strigolactone signaling in Arabidopsis regulates shoot development by targeting D53-like SMXL repressor proteins for ubiquitination and degradation.</title>
        <authorList>
            <person name="Wang L."/>
            <person name="Wang B."/>
            <person name="Jiang L."/>
            <person name="Liu X."/>
            <person name="Li X."/>
            <person name="Lu Z."/>
            <person name="Meng X."/>
            <person name="Wang Y."/>
            <person name="Smith S.M."/>
            <person name="Li J."/>
        </authorList>
    </citation>
    <scope>INTERACTION WITH SMXL6; SMXL7 AND SMXL8</scope>
</reference>
<reference key="11">
    <citation type="journal article" date="2015" name="Sci. Adv.">
        <title>Structural basis for recognition of diverse transcriptional repressors by the TOPLESS family of corepressors.</title>
        <authorList>
            <person name="Ke J."/>
            <person name="Ma H."/>
            <person name="Gu X."/>
            <person name="Thelen A."/>
            <person name="Brunzelle J.S."/>
            <person name="Li J."/>
            <person name="Xu H.E."/>
            <person name="Melcher K."/>
        </authorList>
    </citation>
    <scope>SUBUNIT</scope>
    <scope>DOMAIN</scope>
</reference>
<gene>
    <name type="primary">TPR2</name>
    <name type="ordered locus">At3g16830</name>
    <name type="ORF">K20I9.6</name>
</gene>
<proteinExistence type="evidence at protein level"/>
<name>TPR2_ARATH</name>
<sequence length="1131" mass="124760">MSSLSRELVFLILQFLDEEKFKESVHKLEQESGFFFNIKYFEEKALAGEWDEVEKYLSGFTKVDDNRYSMKIFFEIRKQKYLEALDRNDRAKAVEILAKDLKVFATFNEELYKEITQLLTLENFRENEQLSKYGDTKSARSIMYTELKKLIEANPLFREKLAFPSFKASRLRTLINQSLNWQHQLCKNPRPNPDIKTLFLDHSCSPSNGARALTPVNLPVAAVARPSNFVPLGVHGGPFQSNPAPAPNANALAGWMANPNPSSSVPSGVVAASPFPMQPSQVNELKHPRAPSNSLGLMDYQSADHEQLMKRLRSAQTSNEVTYPAHSHPPASLDDLPRNVVSTIRQGSVVISMDFHPSHHTLLAVGCSSGEVTLWEVGSREKVVTEPFKIWNMAACSVIFQGSIVKEPSISVTRVAWSPDGNLLGVSFTKHLIHVYAYQGSDLRQHLEIDAHVGCVNDLAFAHPNKQMCVVTCGDDKLIKVWDLSGKKLFTFEGHEAPVYSICPHQKENIQFIFSTALDGKIKAWLYDNVGSRVDYDAPGQWCTTMLYSADGSRLFSCGTSKEGDSFLVEWNESEGALKRTYLGFRKKSAGVVQFDTTRNRFLAVGEDNQIKFWNMDNTNLLTVVEAEGGLPNLPRLRFNKDGNLLAVTTADNGFKILANTDGLRTLRAFEARSFEASKASIDMKVSTSAMASSISPAIGKIEHMDAGSPARPTPIPNGIEAMSRTMEKPRNLDSVDKSKPLELTEIVDPTQCRQVTMPDSKDSVSKVARLLYTNSGVGVLALGSNGVQRLWKWIRNEQNPTGKATASVTPQHWQPNSGLLMANDVPENPEGSVPCIALSKNDSYVMSACGGKVSLFNMMTFKVMTTFMPPPPASTFLAFHPQDNNIIAIGMEDSSIHIYNVRVDEVKTKLKGHQKHITGLAFSTALNILVSSGADAQLFFWTADSWEKKKSSAIQLPPGKAPVGDTRVQFHNDQIQLLVSHETQLAIYDASKMECIHKWVPQEALSSPITSASYSCNSQLVYASFADGNIAVFDAESLRLRCRIAPSAYMPQPTPNSAPIFPQVITAHPQEPNQLAVGLSDGSVKVIEPSELSRRWGVGVAAGSDKAGTENGRPSSSSAANNSSSDQIQR</sequence>
<dbReference type="EMBL" id="AB028608">
    <property type="protein sequence ID" value="BAA95777.1"/>
    <property type="molecule type" value="Genomic_DNA"/>
</dbReference>
<dbReference type="EMBL" id="CP002686">
    <property type="protein sequence ID" value="AEE75871.1"/>
    <property type="molecule type" value="Genomic_DNA"/>
</dbReference>
<dbReference type="EMBL" id="AY074277">
    <property type="status" value="NOT_ANNOTATED_CDS"/>
    <property type="molecule type" value="mRNA"/>
</dbReference>
<dbReference type="RefSeq" id="NP_188306.2">
    <property type="nucleotide sequence ID" value="NM_112557.4"/>
</dbReference>
<dbReference type="BioGRID" id="6270">
    <property type="interactions" value="53"/>
</dbReference>
<dbReference type="DIP" id="DIP-58586N"/>
<dbReference type="FunCoup" id="Q9LRZ0">
    <property type="interactions" value="759"/>
</dbReference>
<dbReference type="IntAct" id="Q9LRZ0">
    <property type="interactions" value="4"/>
</dbReference>
<dbReference type="MINT" id="Q9LRZ0"/>
<dbReference type="STRING" id="3702.Q9LRZ0"/>
<dbReference type="GlyGen" id="Q9LRZ0">
    <property type="glycosylation" value="5 sites, 1 O-linked glycan (4 sites)"/>
</dbReference>
<dbReference type="iPTMnet" id="Q9LRZ0"/>
<dbReference type="PaxDb" id="3702-AT3G16830.1"/>
<dbReference type="ProteomicsDB" id="228410"/>
<dbReference type="EnsemblPlants" id="AT3G16830.1">
    <property type="protein sequence ID" value="AT3G16830.1"/>
    <property type="gene ID" value="AT3G16830"/>
</dbReference>
<dbReference type="GeneID" id="820936"/>
<dbReference type="Gramene" id="AT3G16830.1">
    <property type="protein sequence ID" value="AT3G16830.1"/>
    <property type="gene ID" value="AT3G16830"/>
</dbReference>
<dbReference type="KEGG" id="ath:AT3G16830"/>
<dbReference type="Araport" id="AT3G16830"/>
<dbReference type="TAIR" id="AT3G16830">
    <property type="gene designation" value="TPR2"/>
</dbReference>
<dbReference type="eggNOG" id="KOG0266">
    <property type="taxonomic scope" value="Eukaryota"/>
</dbReference>
<dbReference type="HOGENOM" id="CLU_003103_1_0_1"/>
<dbReference type="InParanoid" id="Q9LRZ0"/>
<dbReference type="OMA" id="FHNDQIQ"/>
<dbReference type="OrthoDB" id="1602884at2759"/>
<dbReference type="PhylomeDB" id="Q9LRZ0"/>
<dbReference type="PRO" id="PR:Q9LRZ0"/>
<dbReference type="Proteomes" id="UP000006548">
    <property type="component" value="Chromosome 3"/>
</dbReference>
<dbReference type="ExpressionAtlas" id="Q9LRZ0">
    <property type="expression patterns" value="baseline and differential"/>
</dbReference>
<dbReference type="GO" id="GO:0005634">
    <property type="term" value="C:nucleus"/>
    <property type="evidence" value="ECO:0007669"/>
    <property type="project" value="UniProtKB-SubCell"/>
</dbReference>
<dbReference type="GO" id="GO:0010072">
    <property type="term" value="P:primary shoot apical meristem specification"/>
    <property type="evidence" value="ECO:0000316"/>
    <property type="project" value="TAIR"/>
</dbReference>
<dbReference type="GO" id="GO:0006355">
    <property type="term" value="P:regulation of DNA-templated transcription"/>
    <property type="evidence" value="ECO:0007669"/>
    <property type="project" value="InterPro"/>
</dbReference>
<dbReference type="FunFam" id="2.130.10.10:FF:001382">
    <property type="entry name" value="TOPLESS-related 3"/>
    <property type="match status" value="1"/>
</dbReference>
<dbReference type="FunFam" id="2.130.10.10:FF:001237">
    <property type="entry name" value="Topless-related protein 2"/>
    <property type="match status" value="1"/>
</dbReference>
<dbReference type="FunFam" id="2.130.10.10:FF:000479">
    <property type="entry name" value="Topless-related protein 3"/>
    <property type="match status" value="1"/>
</dbReference>
<dbReference type="Gene3D" id="2.130.10.10">
    <property type="entry name" value="YVTN repeat-like/Quinoprotein amine dehydrogenase"/>
    <property type="match status" value="4"/>
</dbReference>
<dbReference type="InterPro" id="IPR006595">
    <property type="entry name" value="CTLH_C"/>
</dbReference>
<dbReference type="InterPro" id="IPR006594">
    <property type="entry name" value="LisH"/>
</dbReference>
<dbReference type="InterPro" id="IPR011047">
    <property type="entry name" value="Quinoprotein_ADH-like_sf"/>
</dbReference>
<dbReference type="InterPro" id="IPR027728">
    <property type="entry name" value="Topless_fam"/>
</dbReference>
<dbReference type="InterPro" id="IPR048419">
    <property type="entry name" value="Topless_Znf"/>
</dbReference>
<dbReference type="InterPro" id="IPR054532">
    <property type="entry name" value="TPL_SMU1_LisH-like"/>
</dbReference>
<dbReference type="InterPro" id="IPR054080">
    <property type="entry name" value="TPR1-like_2nd"/>
</dbReference>
<dbReference type="InterPro" id="IPR015943">
    <property type="entry name" value="WD40/YVTN_repeat-like_dom_sf"/>
</dbReference>
<dbReference type="InterPro" id="IPR019775">
    <property type="entry name" value="WD40_repeat_CS"/>
</dbReference>
<dbReference type="InterPro" id="IPR036322">
    <property type="entry name" value="WD40_repeat_dom_sf"/>
</dbReference>
<dbReference type="InterPro" id="IPR001680">
    <property type="entry name" value="WD40_rpt"/>
</dbReference>
<dbReference type="PANTHER" id="PTHR44083">
    <property type="entry name" value="TOPLESS-RELATED PROTEIN 1-RELATED"/>
    <property type="match status" value="1"/>
</dbReference>
<dbReference type="PANTHER" id="PTHR44083:SF24">
    <property type="entry name" value="TOPLESS-RELATED PROTEIN 2"/>
    <property type="match status" value="1"/>
</dbReference>
<dbReference type="Pfam" id="PF17814">
    <property type="entry name" value="LisH_TPL"/>
    <property type="match status" value="1"/>
</dbReference>
<dbReference type="Pfam" id="PF21889">
    <property type="entry name" value="TPR1-like_2nd"/>
    <property type="match status" value="1"/>
</dbReference>
<dbReference type="Pfam" id="PF00400">
    <property type="entry name" value="WD40"/>
    <property type="match status" value="3"/>
</dbReference>
<dbReference type="Pfam" id="PF21359">
    <property type="entry name" value="zf_topless"/>
    <property type="match status" value="1"/>
</dbReference>
<dbReference type="SMART" id="SM00668">
    <property type="entry name" value="CTLH"/>
    <property type="match status" value="1"/>
</dbReference>
<dbReference type="SMART" id="SM00667">
    <property type="entry name" value="LisH"/>
    <property type="match status" value="1"/>
</dbReference>
<dbReference type="SMART" id="SM00320">
    <property type="entry name" value="WD40"/>
    <property type="match status" value="11"/>
</dbReference>
<dbReference type="SUPFAM" id="SSF50998">
    <property type="entry name" value="Quinoprotein alcohol dehydrogenase-like"/>
    <property type="match status" value="1"/>
</dbReference>
<dbReference type="SUPFAM" id="SSF50978">
    <property type="entry name" value="WD40 repeat-like"/>
    <property type="match status" value="1"/>
</dbReference>
<dbReference type="PROSITE" id="PS50897">
    <property type="entry name" value="CTLH"/>
    <property type="match status" value="1"/>
</dbReference>
<dbReference type="PROSITE" id="PS50896">
    <property type="entry name" value="LISH"/>
    <property type="match status" value="1"/>
</dbReference>
<dbReference type="PROSITE" id="PS00678">
    <property type="entry name" value="WD_REPEATS_1"/>
    <property type="match status" value="1"/>
</dbReference>
<dbReference type="PROSITE" id="PS50082">
    <property type="entry name" value="WD_REPEATS_2"/>
    <property type="match status" value="2"/>
</dbReference>
<dbReference type="PROSITE" id="PS50294">
    <property type="entry name" value="WD_REPEATS_REGION"/>
    <property type="match status" value="2"/>
</dbReference>
<keyword id="KW-1184">Jasmonic acid signaling pathway</keyword>
<keyword id="KW-0539">Nucleus</keyword>
<keyword id="KW-0597">Phosphoprotein</keyword>
<keyword id="KW-1185">Reference proteome</keyword>
<keyword id="KW-0677">Repeat</keyword>
<keyword id="KW-0678">Repressor</keyword>
<keyword id="KW-0804">Transcription</keyword>
<keyword id="KW-0805">Transcription regulation</keyword>
<keyword id="KW-0853">WD repeat</keyword>
<feature type="chain" id="PRO_0000394733" description="Topless-related protein 2">
    <location>
        <begin position="1"/>
        <end position="1131"/>
    </location>
</feature>
<feature type="domain" description="LisH" evidence="3">
    <location>
        <begin position="4"/>
        <end position="36"/>
    </location>
</feature>
<feature type="domain" description="CTLH" evidence="2">
    <location>
        <begin position="34"/>
        <end position="92"/>
    </location>
</feature>
<feature type="repeat" description="WD 1">
    <location>
        <begin position="345"/>
        <end position="385"/>
    </location>
</feature>
<feature type="repeat" description="WD 2">
    <location>
        <begin position="407"/>
        <end position="446"/>
    </location>
</feature>
<feature type="repeat" description="WD 3">
    <location>
        <begin position="451"/>
        <end position="493"/>
    </location>
</feature>
<feature type="repeat" description="WD 4">
    <location>
        <begin position="495"/>
        <end position="535"/>
    </location>
</feature>
<feature type="repeat" description="WD 5">
    <location>
        <begin position="585"/>
        <end position="624"/>
    </location>
</feature>
<feature type="repeat" description="WD 6">
    <location>
        <begin position="629"/>
        <end position="668"/>
    </location>
</feature>
<feature type="repeat" description="WD 7">
    <location>
        <begin position="763"/>
        <end position="802"/>
    </location>
</feature>
<feature type="repeat" description="WD 8">
    <location>
        <begin position="829"/>
        <end position="867"/>
    </location>
</feature>
<feature type="repeat" description="WD 9">
    <location>
        <begin position="870"/>
        <end position="910"/>
    </location>
</feature>
<feature type="repeat" description="WD 10">
    <location>
        <begin position="913"/>
        <end position="952"/>
    </location>
</feature>
<feature type="repeat" description="WD 11">
    <location>
        <begin position="959"/>
        <end position="999"/>
    </location>
</feature>
<feature type="repeat" description="WD 12">
    <location>
        <begin position="1005"/>
        <end position="1044"/>
    </location>
</feature>
<feature type="region of interest" description="Disordered" evidence="4">
    <location>
        <begin position="1099"/>
        <end position="1131"/>
    </location>
</feature>
<feature type="compositionally biased region" description="Low complexity" evidence="4">
    <location>
        <begin position="1116"/>
        <end position="1131"/>
    </location>
</feature>
<feature type="modified residue" description="Phosphothreonine" evidence="12">
    <location>
        <position position="214"/>
    </location>
</feature>
<protein>
    <recommendedName>
        <fullName>Topless-related protein 2</fullName>
    </recommendedName>
</protein>
<accession>Q9LRZ0</accession>
<organism>
    <name type="scientific">Arabidopsis thaliana</name>
    <name type="common">Mouse-ear cress</name>
    <dbReference type="NCBI Taxonomy" id="3702"/>
    <lineage>
        <taxon>Eukaryota</taxon>
        <taxon>Viridiplantae</taxon>
        <taxon>Streptophyta</taxon>
        <taxon>Embryophyta</taxon>
        <taxon>Tracheophyta</taxon>
        <taxon>Spermatophyta</taxon>
        <taxon>Magnoliopsida</taxon>
        <taxon>eudicotyledons</taxon>
        <taxon>Gunneridae</taxon>
        <taxon>Pentapetalae</taxon>
        <taxon>rosids</taxon>
        <taxon>malvids</taxon>
        <taxon>Brassicales</taxon>
        <taxon>Brassicaceae</taxon>
        <taxon>Camelineae</taxon>
        <taxon>Arabidopsis</taxon>
    </lineage>
</organism>